<evidence type="ECO:0000255" key="1">
    <source>
        <dbReference type="HAMAP-Rule" id="MF_00105"/>
    </source>
</evidence>
<keyword id="KW-0175">Coiled coil</keyword>
<keyword id="KW-0238">DNA-binding</keyword>
<keyword id="KW-0804">Transcription</keyword>
<keyword id="KW-0805">Transcription regulation</keyword>
<organism>
    <name type="scientific">Streptococcus thermophilus (strain CNRZ 1066)</name>
    <dbReference type="NCBI Taxonomy" id="299768"/>
    <lineage>
        <taxon>Bacteria</taxon>
        <taxon>Bacillati</taxon>
        <taxon>Bacillota</taxon>
        <taxon>Bacilli</taxon>
        <taxon>Lactobacillales</taxon>
        <taxon>Streptococcaceae</taxon>
        <taxon>Streptococcus</taxon>
    </lineage>
</organism>
<sequence>MAEKTYVMTLAEKKQLEAELEEYKLVRRPEVVERIKIARSYGDLSENSEYEAAKDEQAFIEGQIQILETKIRYAEIVDSDAVANDEVAIGKTVVVQEVGTSDKDTYHIVGAAGADIFSGKISNESPIAQALIGKKVGDKVAIESPAGSYSVEILSVEKTS</sequence>
<name>GREA_STRT1</name>
<protein>
    <recommendedName>
        <fullName evidence="1">Transcription elongation factor GreA</fullName>
    </recommendedName>
    <alternativeName>
        <fullName evidence="1">Transcript cleavage factor GreA</fullName>
    </alternativeName>
</protein>
<accession>Q5M1J6</accession>
<feature type="chain" id="PRO_1000034313" description="Transcription elongation factor GreA">
    <location>
        <begin position="1"/>
        <end position="160"/>
    </location>
</feature>
<feature type="coiled-coil region" evidence="1">
    <location>
        <begin position="1"/>
        <end position="72"/>
    </location>
</feature>
<gene>
    <name evidence="1" type="primary">greA</name>
    <name type="ordered locus">str0242</name>
</gene>
<comment type="function">
    <text evidence="1">Necessary for efficient RNA polymerase transcription elongation past template-encoded arresting sites. The arresting sites in DNA have the property of trapping a certain fraction of elongating RNA polymerases that pass through, resulting in locked ternary complexes. Cleavage of the nascent transcript by cleavage factors such as GreA or GreB allows the resumption of elongation from the new 3'terminus. GreA releases sequences of 2 to 3 nucleotides.</text>
</comment>
<comment type="similarity">
    <text evidence="1">Belongs to the GreA/GreB family.</text>
</comment>
<proteinExistence type="inferred from homology"/>
<reference key="1">
    <citation type="journal article" date="2004" name="Nat. Biotechnol.">
        <title>Complete sequence and comparative genome analysis of the dairy bacterium Streptococcus thermophilus.</title>
        <authorList>
            <person name="Bolotin A."/>
            <person name="Quinquis B."/>
            <person name="Renault P."/>
            <person name="Sorokin A."/>
            <person name="Ehrlich S.D."/>
            <person name="Kulakauskas S."/>
            <person name="Lapidus A."/>
            <person name="Goltsman E."/>
            <person name="Mazur M."/>
            <person name="Pusch G.D."/>
            <person name="Fonstein M."/>
            <person name="Overbeek R."/>
            <person name="Kyprides N."/>
            <person name="Purnelle B."/>
            <person name="Prozzi D."/>
            <person name="Ngui K."/>
            <person name="Masuy D."/>
            <person name="Hancy F."/>
            <person name="Burteau S."/>
            <person name="Boutry M."/>
            <person name="Delcour J."/>
            <person name="Goffeau A."/>
            <person name="Hols P."/>
        </authorList>
    </citation>
    <scope>NUCLEOTIDE SEQUENCE [LARGE SCALE GENOMIC DNA]</scope>
    <source>
        <strain>CNRZ 1066</strain>
    </source>
</reference>
<dbReference type="EMBL" id="CP000024">
    <property type="protein sequence ID" value="AAV61856.1"/>
    <property type="molecule type" value="Genomic_DNA"/>
</dbReference>
<dbReference type="RefSeq" id="WP_002947730.1">
    <property type="nucleotide sequence ID" value="NC_006449.1"/>
</dbReference>
<dbReference type="SMR" id="Q5M1J6"/>
<dbReference type="GeneID" id="66898173"/>
<dbReference type="KEGG" id="stc:str0242"/>
<dbReference type="HOGENOM" id="CLU_101379_2_1_9"/>
<dbReference type="GO" id="GO:0003677">
    <property type="term" value="F:DNA binding"/>
    <property type="evidence" value="ECO:0007669"/>
    <property type="project" value="UniProtKB-UniRule"/>
</dbReference>
<dbReference type="GO" id="GO:0070063">
    <property type="term" value="F:RNA polymerase binding"/>
    <property type="evidence" value="ECO:0007669"/>
    <property type="project" value="InterPro"/>
</dbReference>
<dbReference type="GO" id="GO:0006354">
    <property type="term" value="P:DNA-templated transcription elongation"/>
    <property type="evidence" value="ECO:0007669"/>
    <property type="project" value="TreeGrafter"/>
</dbReference>
<dbReference type="GO" id="GO:0032784">
    <property type="term" value="P:regulation of DNA-templated transcription elongation"/>
    <property type="evidence" value="ECO:0007669"/>
    <property type="project" value="UniProtKB-UniRule"/>
</dbReference>
<dbReference type="FunFam" id="1.10.287.180:FF:000001">
    <property type="entry name" value="Transcription elongation factor GreA"/>
    <property type="match status" value="1"/>
</dbReference>
<dbReference type="FunFam" id="3.10.50.30:FF:000001">
    <property type="entry name" value="Transcription elongation factor GreA"/>
    <property type="match status" value="1"/>
</dbReference>
<dbReference type="Gene3D" id="3.10.50.30">
    <property type="entry name" value="Transcription elongation factor, GreA/GreB, C-terminal domain"/>
    <property type="match status" value="1"/>
</dbReference>
<dbReference type="Gene3D" id="1.10.287.180">
    <property type="entry name" value="Transcription elongation factor, GreA/GreB, N-terminal domain"/>
    <property type="match status" value="1"/>
</dbReference>
<dbReference type="HAMAP" id="MF_00105">
    <property type="entry name" value="GreA_GreB"/>
    <property type="match status" value="1"/>
</dbReference>
<dbReference type="InterPro" id="IPR036953">
    <property type="entry name" value="GreA/GreB_C_sf"/>
</dbReference>
<dbReference type="InterPro" id="IPR018151">
    <property type="entry name" value="TF_GreA/GreB_CS"/>
</dbReference>
<dbReference type="InterPro" id="IPR006359">
    <property type="entry name" value="Tscrpt_elong_fac_GreA"/>
</dbReference>
<dbReference type="InterPro" id="IPR028624">
    <property type="entry name" value="Tscrpt_elong_fac_GreA/B"/>
</dbReference>
<dbReference type="InterPro" id="IPR001437">
    <property type="entry name" value="Tscrpt_elong_fac_GreA/B_C"/>
</dbReference>
<dbReference type="InterPro" id="IPR023459">
    <property type="entry name" value="Tscrpt_elong_fac_GreA/B_fam"/>
</dbReference>
<dbReference type="InterPro" id="IPR022691">
    <property type="entry name" value="Tscrpt_elong_fac_GreA/B_N"/>
</dbReference>
<dbReference type="InterPro" id="IPR036805">
    <property type="entry name" value="Tscrpt_elong_fac_GreA/B_N_sf"/>
</dbReference>
<dbReference type="NCBIfam" id="TIGR01462">
    <property type="entry name" value="greA"/>
    <property type="match status" value="1"/>
</dbReference>
<dbReference type="NCBIfam" id="NF001260">
    <property type="entry name" value="PRK00226.1-1"/>
    <property type="match status" value="1"/>
</dbReference>
<dbReference type="NCBIfam" id="NF001263">
    <property type="entry name" value="PRK00226.1-4"/>
    <property type="match status" value="1"/>
</dbReference>
<dbReference type="PANTHER" id="PTHR30437">
    <property type="entry name" value="TRANSCRIPTION ELONGATION FACTOR GREA"/>
    <property type="match status" value="1"/>
</dbReference>
<dbReference type="PANTHER" id="PTHR30437:SF4">
    <property type="entry name" value="TRANSCRIPTION ELONGATION FACTOR GREA"/>
    <property type="match status" value="1"/>
</dbReference>
<dbReference type="Pfam" id="PF01272">
    <property type="entry name" value="GreA_GreB"/>
    <property type="match status" value="1"/>
</dbReference>
<dbReference type="Pfam" id="PF03449">
    <property type="entry name" value="GreA_GreB_N"/>
    <property type="match status" value="1"/>
</dbReference>
<dbReference type="PIRSF" id="PIRSF006092">
    <property type="entry name" value="GreA_GreB"/>
    <property type="match status" value="1"/>
</dbReference>
<dbReference type="SUPFAM" id="SSF54534">
    <property type="entry name" value="FKBP-like"/>
    <property type="match status" value="1"/>
</dbReference>
<dbReference type="SUPFAM" id="SSF46557">
    <property type="entry name" value="GreA transcript cleavage protein, N-terminal domain"/>
    <property type="match status" value="1"/>
</dbReference>
<dbReference type="PROSITE" id="PS00829">
    <property type="entry name" value="GREAB_1"/>
    <property type="match status" value="1"/>
</dbReference>
<dbReference type="PROSITE" id="PS00830">
    <property type="entry name" value="GREAB_2"/>
    <property type="match status" value="1"/>
</dbReference>